<name>MRCKA_HUMAN</name>
<organism>
    <name type="scientific">Homo sapiens</name>
    <name type="common">Human</name>
    <dbReference type="NCBI Taxonomy" id="9606"/>
    <lineage>
        <taxon>Eukaryota</taxon>
        <taxon>Metazoa</taxon>
        <taxon>Chordata</taxon>
        <taxon>Craniata</taxon>
        <taxon>Vertebrata</taxon>
        <taxon>Euteleostomi</taxon>
        <taxon>Mammalia</taxon>
        <taxon>Eutheria</taxon>
        <taxon>Euarchontoglires</taxon>
        <taxon>Primates</taxon>
        <taxon>Haplorrhini</taxon>
        <taxon>Catarrhini</taxon>
        <taxon>Hominidae</taxon>
        <taxon>Homo</taxon>
    </lineage>
</organism>
<gene>
    <name evidence="37" type="primary">CDC42BPA</name>
    <name type="synonym">KIAA0451</name>
</gene>
<sequence>MSGEVRLRQLEQFILDGPAQTNGQCFSVETLLDILICLYDECNNSPLRREKNILEYLEWAKPFTSKVKQMRLHREDFEILKVIGRGAFGEVAVVKLKNADKVFAMKILNKWEMLKRAETACFREERDVLVNGDNKWITTLHYAFQDDNNLYLVMDYYVGGDLLTLLSKFEDRLPEDMARFYLAEMVIAIDSVHQLHYVHRDIKPDNILMDMNGHIRLADFGSCLKLMEDGTVQSSVAVGTPDYISPEILQAMEDGKGRYGPECDWWSLGVCMYEMLYGETPFYAESLVETYGKIMNHKERFQFPAQVTDVSENAKDLIRRLICSREHRLGQNGIEDFKKHPFFSGIDWDNIRNCEAPYIPEVSSPTDTSNFDVDDDCLKNSETMPPPTHTAFSGHHLPFVGFTYTSSCVLSDRSCLRVTAGPTSLDLDVNVQRTLDNNLATEAYERRIKRLEQEKLELSRKLQESTQTVQALQYSTVDGPLTASKDLEIKNLKEEIEKLRKQVTESSHLEQQLEEANAVRQELDDAFRQIKAYEKQIKTLQQEREDLNKELVQASERLKNQSKELKDAHCQRKLAMQEFMEINERLTELHTQKQKLARHVRDKEEEVDLVMQKVESLRQELRRTERAKKELEVHTEALAAEASKDRKLREQSEHYSKQLENELEGLKQKQISYSPGVCSIEHQQEITKLKTDLEKKSIFYEEELSKREGIHANEIKNLKKELHDSEGQQLALNKEIMILKDKLEKTRRESQSEREEFESEFKQQYEREKVLLTEENKKLTSELDKLTTLYENLSIHNQQLEEEVKDLADKKESVAHWEAQITEIIQWVSDEKDARGYLQALASKMTEELEALRNSSLGTRATDMPWKMRRFAKLDMSARLELQSALDAEIRAKQAIQEELNKVKASNIITECKLKDSEKKNLELLSEIEQLIKDTEELRSEKGIEHQDSQHSFLAFLNTPTDALDQFERSPSCTPASKGRRTVDSTPLSVHTPTLRKKGCPGSTGFPPKRKTHQFFVKSFTTPTKCHQCTSLMVGLIRQGCSCEVCGFSCHITCVNKAPTTCPVPPEQTKGPLGIDPQKGIGTAYEGHVRIPKPAGVKKGWQRALAIVCDFKLFLYDIAEGKASQPSVVISQVIDMRDEEFSVSSVLASDVIHASRKDIPCIFRVTASQLSASNNKCSILMLADTENEKNKWVGVLSELHKILKKNKFRDRSVYVPKEAYDSTLPLIKTTQAAAIIDHERIALGNEEGLFVVHVTKDEIIRVGDNKKIHQIELIPNDQLVAVISGRNRHVRLFPMSALDGRETDFYKLSETKGCQTVTSGKVRHGALTCLCVAMKRQVLCYELFQSKTRHRKFKEIQVPYNVQWMAIFSEQLCVGFQSGFLRYPLNGEGNPYSMLHSNDHTLSFIAHQPMDAICAVEISSKEYLLCFNSIGIYTDCQGRRSRQQELMWPANPSSCCYNAPYLSVYSENAVDIFDVNSMEWIQTLPLKKVRPLNNEGSLNLLGLETIRLIYFKNKMAEGDELVVPETSDNSRKQMVRNINNKRRYSFRVPEEERMQQRREMLRDPEMRNKLISNPTNFNHIAHMGPGDGIQILKDLPMNPRPQESRTVFSGSVSIPSITKSRPEPGRSMSASSGLSARSSAQNGSALKREFSGGSYSAKRQPMPSPSEGSLSSGGMDQGSDAPARDFDGEDSDSPRHSTASNSSNLSSPPSPASPRKTKSLSLESTDRGSWDP</sequence>
<accession>Q5VT25</accession>
<accession>O75039</accession>
<accession>Q59GZ1</accession>
<accession>Q5H9N9</accession>
<accession>Q5T797</accession>
<accession>Q5VT26</accession>
<accession>Q5VT27</accession>
<accession>Q86XX2</accession>
<accession>Q86XX3</accession>
<accession>Q99646</accession>
<evidence type="ECO:0000250" key="1">
    <source>
        <dbReference type="UniProtKB" id="O54874"/>
    </source>
</evidence>
<evidence type="ECO:0000250" key="2">
    <source>
        <dbReference type="UniProtKB" id="P54265"/>
    </source>
</evidence>
<evidence type="ECO:0000250" key="3">
    <source>
        <dbReference type="UniProtKB" id="Q3UU96"/>
    </source>
</evidence>
<evidence type="ECO:0000255" key="4"/>
<evidence type="ECO:0000255" key="5">
    <source>
        <dbReference type="PROSITE-ProRule" id="PRU00057"/>
    </source>
</evidence>
<evidence type="ECO:0000255" key="6">
    <source>
        <dbReference type="PROSITE-ProRule" id="PRU00145"/>
    </source>
</evidence>
<evidence type="ECO:0000255" key="7">
    <source>
        <dbReference type="PROSITE-ProRule" id="PRU00159"/>
    </source>
</evidence>
<evidence type="ECO:0000255" key="8">
    <source>
        <dbReference type="PROSITE-ProRule" id="PRU00226"/>
    </source>
</evidence>
<evidence type="ECO:0000255" key="9">
    <source>
        <dbReference type="PROSITE-ProRule" id="PRU00618"/>
    </source>
</evidence>
<evidence type="ECO:0000255" key="10">
    <source>
        <dbReference type="PROSITE-ProRule" id="PRU00795"/>
    </source>
</evidence>
<evidence type="ECO:0000255" key="11">
    <source>
        <dbReference type="PROSITE-ProRule" id="PRU10027"/>
    </source>
</evidence>
<evidence type="ECO:0000256" key="12">
    <source>
        <dbReference type="SAM" id="MobiDB-lite"/>
    </source>
</evidence>
<evidence type="ECO:0000269" key="13">
    <source>
    </source>
</evidence>
<evidence type="ECO:0000269" key="14">
    <source>
    </source>
</evidence>
<evidence type="ECO:0000269" key="15">
    <source>
    </source>
</evidence>
<evidence type="ECO:0000269" key="16">
    <source>
    </source>
</evidence>
<evidence type="ECO:0000269" key="17">
    <source>
    </source>
</evidence>
<evidence type="ECO:0000269" key="18">
    <source>
    </source>
</evidence>
<evidence type="ECO:0000269" key="19">
    <source>
    </source>
</evidence>
<evidence type="ECO:0000269" key="20">
    <source>
    </source>
</evidence>
<evidence type="ECO:0000269" key="21">
    <source>
    </source>
</evidence>
<evidence type="ECO:0000269" key="22">
    <source>
    </source>
</evidence>
<evidence type="ECO:0000269" key="23">
    <source>
    </source>
</evidence>
<evidence type="ECO:0000269" key="24">
    <source>
    </source>
</evidence>
<evidence type="ECO:0000269" key="25">
    <source>
    </source>
</evidence>
<evidence type="ECO:0000269" key="26">
    <source>
    </source>
</evidence>
<evidence type="ECO:0000269" key="27">
    <source ref="2"/>
</evidence>
<evidence type="ECO:0000303" key="28">
    <source>
    </source>
</evidence>
<evidence type="ECO:0000303" key="29">
    <source>
    </source>
</evidence>
<evidence type="ECO:0000303" key="30">
    <source>
    </source>
</evidence>
<evidence type="ECO:0000303" key="31">
    <source>
    </source>
</evidence>
<evidence type="ECO:0000303" key="32">
    <source ref="2"/>
</evidence>
<evidence type="ECO:0000305" key="33"/>
<evidence type="ECO:0000312" key="34">
    <source>
        <dbReference type="EMBL" id="AAB37126.1"/>
    </source>
</evidence>
<evidence type="ECO:0000312" key="35">
    <source>
        <dbReference type="EMBL" id="CAD57745.1"/>
    </source>
</evidence>
<evidence type="ECO:0000312" key="36">
    <source>
        <dbReference type="EMBL" id="CAD57746.1"/>
    </source>
</evidence>
<evidence type="ECO:0000312" key="37">
    <source>
        <dbReference type="EMBL" id="CAH71336.1"/>
    </source>
</evidence>
<evidence type="ECO:0007744" key="38">
    <source>
    </source>
</evidence>
<evidence type="ECO:0007744" key="39">
    <source>
    </source>
</evidence>
<evidence type="ECO:0007744" key="40">
    <source>
    </source>
</evidence>
<evidence type="ECO:0007744" key="41">
    <source>
    </source>
</evidence>
<reference evidence="33 36" key="1">
    <citation type="journal article" date="2005" name="Nat. Cell Biol.">
        <title>Cdc42-MRCK and Rho-ROCK signalling cooperate in myosin phosphorylation and cell invasion.</title>
        <authorList>
            <person name="Wilkinson S."/>
            <person name="Paterson H.F."/>
            <person name="Marshall C.J."/>
        </authorList>
    </citation>
    <scope>NUCLEOTIDE SEQUENCE [MRNA] (ISOFORMS 3 AND 5)</scope>
    <scope>FUNCTION</scope>
    <source>
        <tissue evidence="36">Colon</tissue>
    </source>
</reference>
<reference evidence="33 35" key="2">
    <citation type="submission" date="2005-03" db="EMBL/GenBank/DDBJ databases">
        <authorList>
            <person name="Totoki Y."/>
            <person name="Toyoda A."/>
            <person name="Takeda T."/>
            <person name="Sakaki Y."/>
            <person name="Tanaka A."/>
            <person name="Yokoyama S."/>
            <person name="Ohara O."/>
            <person name="Nagase T."/>
            <person name="Kikuno R.F."/>
        </authorList>
    </citation>
    <scope>NUCLEOTIDE SEQUENCE [LARGE SCALE MRNA] (ISOFORM 4)</scope>
    <scope>VARIANT VAL-1712</scope>
    <source>
        <tissue evidence="35">Brain</tissue>
    </source>
</reference>
<reference key="3">
    <citation type="journal article" date="2007" name="BMC Genomics">
        <title>The full-ORF clone resource of the German cDNA consortium.</title>
        <authorList>
            <person name="Bechtel S."/>
            <person name="Rosenfelder H."/>
            <person name="Duda A."/>
            <person name="Schmidt C.P."/>
            <person name="Ernst U."/>
            <person name="Wellenreuther R."/>
            <person name="Mehrle A."/>
            <person name="Schuster C."/>
            <person name="Bahr A."/>
            <person name="Bloecker H."/>
            <person name="Heubner D."/>
            <person name="Hoerlein A."/>
            <person name="Michel G."/>
            <person name="Wedler H."/>
            <person name="Koehrer K."/>
            <person name="Ottenwaelder B."/>
            <person name="Poustka A."/>
            <person name="Wiemann S."/>
            <person name="Schupp I."/>
        </authorList>
    </citation>
    <scope>NUCLEOTIDE SEQUENCE [LARGE SCALE MRNA] (ISOFORM 2)</scope>
    <scope>VARIANTS ILE-1317 AND VAL-1712</scope>
    <source>
        <tissue>Testis</tissue>
    </source>
</reference>
<reference key="4">
    <citation type="journal article" date="2006" name="Nature">
        <title>The DNA sequence and biological annotation of human chromosome 1.</title>
        <authorList>
            <person name="Gregory S.G."/>
            <person name="Barlow K.F."/>
            <person name="McLay K.E."/>
            <person name="Kaul R."/>
            <person name="Swarbreck D."/>
            <person name="Dunham A."/>
            <person name="Scott C.E."/>
            <person name="Howe K.L."/>
            <person name="Woodfine K."/>
            <person name="Spencer C.C.A."/>
            <person name="Jones M.C."/>
            <person name="Gillson C."/>
            <person name="Searle S."/>
            <person name="Zhou Y."/>
            <person name="Kokocinski F."/>
            <person name="McDonald L."/>
            <person name="Evans R."/>
            <person name="Phillips K."/>
            <person name="Atkinson A."/>
            <person name="Cooper R."/>
            <person name="Jones C."/>
            <person name="Hall R.E."/>
            <person name="Andrews T.D."/>
            <person name="Lloyd C."/>
            <person name="Ainscough R."/>
            <person name="Almeida J.P."/>
            <person name="Ambrose K.D."/>
            <person name="Anderson F."/>
            <person name="Andrew R.W."/>
            <person name="Ashwell R.I.S."/>
            <person name="Aubin K."/>
            <person name="Babbage A.K."/>
            <person name="Bagguley C.L."/>
            <person name="Bailey J."/>
            <person name="Beasley H."/>
            <person name="Bethel G."/>
            <person name="Bird C.P."/>
            <person name="Bray-Allen S."/>
            <person name="Brown J.Y."/>
            <person name="Brown A.J."/>
            <person name="Buckley D."/>
            <person name="Burton J."/>
            <person name="Bye J."/>
            <person name="Carder C."/>
            <person name="Chapman J.C."/>
            <person name="Clark S.Y."/>
            <person name="Clarke G."/>
            <person name="Clee C."/>
            <person name="Cobley V."/>
            <person name="Collier R.E."/>
            <person name="Corby N."/>
            <person name="Coville G.J."/>
            <person name="Davies J."/>
            <person name="Deadman R."/>
            <person name="Dunn M."/>
            <person name="Earthrowl M."/>
            <person name="Ellington A.G."/>
            <person name="Errington H."/>
            <person name="Frankish A."/>
            <person name="Frankland J."/>
            <person name="French L."/>
            <person name="Garner P."/>
            <person name="Garnett J."/>
            <person name="Gay L."/>
            <person name="Ghori M.R.J."/>
            <person name="Gibson R."/>
            <person name="Gilby L.M."/>
            <person name="Gillett W."/>
            <person name="Glithero R.J."/>
            <person name="Grafham D.V."/>
            <person name="Griffiths C."/>
            <person name="Griffiths-Jones S."/>
            <person name="Grocock R."/>
            <person name="Hammond S."/>
            <person name="Harrison E.S.I."/>
            <person name="Hart E."/>
            <person name="Haugen E."/>
            <person name="Heath P.D."/>
            <person name="Holmes S."/>
            <person name="Holt K."/>
            <person name="Howden P.J."/>
            <person name="Hunt A.R."/>
            <person name="Hunt S.E."/>
            <person name="Hunter G."/>
            <person name="Isherwood J."/>
            <person name="James R."/>
            <person name="Johnson C."/>
            <person name="Johnson D."/>
            <person name="Joy A."/>
            <person name="Kay M."/>
            <person name="Kershaw J.K."/>
            <person name="Kibukawa M."/>
            <person name="Kimberley A.M."/>
            <person name="King A."/>
            <person name="Knights A.J."/>
            <person name="Lad H."/>
            <person name="Laird G."/>
            <person name="Lawlor S."/>
            <person name="Leongamornlert D.A."/>
            <person name="Lloyd D.M."/>
            <person name="Loveland J."/>
            <person name="Lovell J."/>
            <person name="Lush M.J."/>
            <person name="Lyne R."/>
            <person name="Martin S."/>
            <person name="Mashreghi-Mohammadi M."/>
            <person name="Matthews L."/>
            <person name="Matthews N.S.W."/>
            <person name="McLaren S."/>
            <person name="Milne S."/>
            <person name="Mistry S."/>
            <person name="Moore M.J.F."/>
            <person name="Nickerson T."/>
            <person name="O'Dell C.N."/>
            <person name="Oliver K."/>
            <person name="Palmeiri A."/>
            <person name="Palmer S.A."/>
            <person name="Parker A."/>
            <person name="Patel D."/>
            <person name="Pearce A.V."/>
            <person name="Peck A.I."/>
            <person name="Pelan S."/>
            <person name="Phelps K."/>
            <person name="Phillimore B.J."/>
            <person name="Plumb R."/>
            <person name="Rajan J."/>
            <person name="Raymond C."/>
            <person name="Rouse G."/>
            <person name="Saenphimmachak C."/>
            <person name="Sehra H.K."/>
            <person name="Sheridan E."/>
            <person name="Shownkeen R."/>
            <person name="Sims S."/>
            <person name="Skuce C.D."/>
            <person name="Smith M."/>
            <person name="Steward C."/>
            <person name="Subramanian S."/>
            <person name="Sycamore N."/>
            <person name="Tracey A."/>
            <person name="Tromans A."/>
            <person name="Van Helmond Z."/>
            <person name="Wall M."/>
            <person name="Wallis J.M."/>
            <person name="White S."/>
            <person name="Whitehead S.L."/>
            <person name="Wilkinson J.E."/>
            <person name="Willey D.L."/>
            <person name="Williams H."/>
            <person name="Wilming L."/>
            <person name="Wray P.W."/>
            <person name="Wu Z."/>
            <person name="Coulson A."/>
            <person name="Vaudin M."/>
            <person name="Sulston J.E."/>
            <person name="Durbin R.M."/>
            <person name="Hubbard T."/>
            <person name="Wooster R."/>
            <person name="Dunham I."/>
            <person name="Carter N.P."/>
            <person name="McVean G."/>
            <person name="Ross M.T."/>
            <person name="Harrow J."/>
            <person name="Olson M.V."/>
            <person name="Beck S."/>
            <person name="Rogers J."/>
            <person name="Bentley D.R."/>
        </authorList>
    </citation>
    <scope>NUCLEOTIDE SEQUENCE [LARGE SCALE GENOMIC DNA]</scope>
</reference>
<reference evidence="33 34" key="5">
    <citation type="journal article" date="1997" name="J. Biol. Chem.">
        <title>Cloning and chromosomal location of a novel member of the myotonic dystrophy family of protein kinases.</title>
        <authorList>
            <person name="Zhao Y."/>
            <person name="Loyer P."/>
            <person name="Li H."/>
            <person name="Valentine V."/>
            <person name="Kidd V."/>
            <person name="Kraft A.S."/>
        </authorList>
    </citation>
    <scope>NUCLEOTIDE SEQUENCE [MRNA] OF 1-496</scope>
    <scope>FUNCTION</scope>
    <scope>TISSUE SPECIFICITY</scope>
    <source>
        <tissue evidence="24">Mammary gland</tissue>
    </source>
</reference>
<reference key="6">
    <citation type="journal article" date="1997" name="DNA Res.">
        <title>Characterization of cDNA clones in size-fractionated cDNA libraries from human brain.</title>
        <authorList>
            <person name="Seki N."/>
            <person name="Ohira M."/>
            <person name="Nagase T."/>
            <person name="Ishikawa K."/>
            <person name="Miyajima N."/>
            <person name="Nakajima D."/>
            <person name="Nomura N."/>
            <person name="Ohara O."/>
        </authorList>
    </citation>
    <scope>NUCLEOTIDE SEQUENCE [LARGE SCALE MRNA] OF 799-1732 (ISOFORM 6)</scope>
    <scope>VARIANT VAL-1712</scope>
    <source>
        <tissue>Brain</tissue>
    </source>
</reference>
<reference evidence="33 35" key="7">
    <citation type="submission" date="2003-08" db="EMBL/GenBank/DDBJ databases">
        <authorList>
            <person name="Ohara O."/>
        </authorList>
    </citation>
    <scope>SEQUENCE REVISION</scope>
</reference>
<reference evidence="33" key="8">
    <citation type="journal article" date="1998" name="Mol. Cell. Biol.">
        <title>Myotonic dystrophy kinase-related Cdc42-binding kinase acts as a Cdc42 effector in promoting cytoskeletal reorganization.</title>
        <authorList>
            <person name="Leung T."/>
            <person name="Chen X.-Q."/>
            <person name="Tan I."/>
            <person name="Manser E."/>
            <person name="Lim L."/>
        </authorList>
    </citation>
    <scope>NUCLEOTIDE SEQUENCE [MRNA] OF 1521-1644</scope>
    <scope>FUNCTION</scope>
    <scope>INTERACTION WITH CDC42</scope>
    <scope>MUTAGENESIS OF HIS-1579 AND HIS-1582</scope>
    <source>
        <tissue evidence="25">Brain</tissue>
    </source>
</reference>
<reference key="9">
    <citation type="journal article" date="2001" name="J. Biol. Chem.">
        <title>Phosphorylation of a novel myosin binding subunit of protein phosphatase 1 reveals a conserved mechanism in the regulation of actin cytoskeleton.</title>
        <authorList>
            <person name="Tan I."/>
            <person name="Ng C.H."/>
            <person name="Lim L."/>
            <person name="Leung T."/>
        </authorList>
    </citation>
    <scope>FUNCTION IN PHOSPHORYLATION OF PPP1R12C</scope>
</reference>
<reference key="10">
    <citation type="journal article" date="2001" name="J. Biol. Chem.">
        <title>Activation of LIM kinases by myotonic dystrophy kinase-related Cdc42-binding kinase alpha.</title>
        <authorList>
            <person name="Sumi T."/>
            <person name="Matsumoto K."/>
            <person name="Shibuya A."/>
            <person name="Nakamura T."/>
        </authorList>
    </citation>
    <scope>FUNCTION IN PHOSPHORYLATION OF LIMK1 AND LIMK2</scope>
</reference>
<reference evidence="33" key="11">
    <citation type="journal article" date="2001" name="Mol. Cell. Biol.">
        <title>Intermolecular and intramolecular interactions regulate catalytic activity of myotonic dystrophy kinase-related Cdc42-binding kinase alpha.</title>
        <authorList>
            <person name="Tan I."/>
            <person name="Seow K.T."/>
            <person name="Lim L."/>
            <person name="Leung T."/>
        </authorList>
    </citation>
    <scope>ACTIVITY REGULATION</scope>
    <scope>OLIGOMERIZATION</scope>
    <scope>PHOSPHORYLATION AT SER-222; SER-234 AND THR-240</scope>
    <scope>MUTAGENESIS OF LYS-106; SER-222; SER-234; THR-240 AND THR-403</scope>
</reference>
<reference key="12">
    <citation type="journal article" date="2003" name="Gene">
        <title>Genomic organization of human myotonic dystrophy kinase-related Cdc42-binding kinase alpha reveals multiple alternative splicing and functional diversity.</title>
        <authorList>
            <person name="Tan I."/>
            <person name="Cheong A."/>
            <person name="Lim L."/>
            <person name="Leung T."/>
        </authorList>
    </citation>
    <scope>ALTERNATIVE SPLICING</scope>
</reference>
<reference key="13">
    <citation type="journal article" date="2008" name="Cell">
        <title>A tripartite complex containing MRCK modulates lamellar actomyosin retrograde flow.</title>
        <authorList>
            <person name="Tan I."/>
            <person name="Yong J."/>
            <person name="Dong J.M."/>
            <person name="Lim L."/>
            <person name="Leung T."/>
        </authorList>
    </citation>
    <scope>FUNCTION</scope>
    <scope>INTERACTION WITH LURAP1 AND MYO18A</scope>
</reference>
<reference key="14">
    <citation type="journal article" date="2008" name="Proc. Natl. Acad. Sci. U.S.A.">
        <title>A quantitative atlas of mitotic phosphorylation.</title>
        <authorList>
            <person name="Dephoure N."/>
            <person name="Zhou C."/>
            <person name="Villen J."/>
            <person name="Beausoleil S.A."/>
            <person name="Bakalarski C.E."/>
            <person name="Elledge S.J."/>
            <person name="Gygi S.P."/>
        </authorList>
    </citation>
    <scope>PHOSPHORYLATION [LARGE SCALE ANALYSIS] AT SER-1545; SER-1719 AND SER-1721</scope>
    <scope>IDENTIFICATION BY MASS SPECTROMETRY [LARGE SCALE ANALYSIS]</scope>
    <source>
        <tissue>Cervix carcinoma</tissue>
    </source>
</reference>
<reference key="15">
    <citation type="journal article" date="2010" name="Biochem. Biophys. Res. Commun.">
        <title>Human MRCKalpha is regulated by cellular iron levels and interferes with transferrin iron uptake.</title>
        <authorList>
            <person name="Cmejla R."/>
            <person name="Ptackova P."/>
            <person name="Petrak J."/>
            <person name="Savvulidi F."/>
            <person name="Cerny J."/>
            <person name="Sebesta O."/>
            <person name="Vyoral D."/>
        </authorList>
    </citation>
    <scope>FUNCTION</scope>
    <scope>INDUCTION</scope>
</reference>
<reference key="16">
    <citation type="journal article" date="2011" name="BMC Syst. Biol.">
        <title>Initial characterization of the human central proteome.</title>
        <authorList>
            <person name="Burkard T.R."/>
            <person name="Planyavsky M."/>
            <person name="Kaupe I."/>
            <person name="Breitwieser F.P."/>
            <person name="Buerckstuemmer T."/>
            <person name="Bennett K.L."/>
            <person name="Superti-Furga G."/>
            <person name="Colinge J."/>
        </authorList>
    </citation>
    <scope>IDENTIFICATION BY MASS SPECTROMETRY [LARGE SCALE ANALYSIS]</scope>
</reference>
<reference key="17">
    <citation type="journal article" date="2011" name="FEBS Lett.">
        <title>Chelerythrine perturbs lamellar actomyosin filaments by selective inhibition of myotonic dystrophy kinase-related Cdc42-binding kinase.</title>
        <authorList>
            <person name="Tan I."/>
            <person name="Lai J."/>
            <person name="Yong J."/>
            <person name="Li S.F."/>
            <person name="Leung T."/>
        </authorList>
    </citation>
    <scope>FUNCTION IN PHOSPHORYLATION OF PPP1R12A AND MYL9/MLC2</scope>
    <scope>ACTIVITY REGULATION</scope>
</reference>
<reference key="18">
    <citation type="journal article" date="2011" name="Sci. Signal.">
        <title>System-wide temporal characterization of the proteome and phosphoproteome of human embryonic stem cell differentiation.</title>
        <authorList>
            <person name="Rigbolt K.T."/>
            <person name="Prokhorova T.A."/>
            <person name="Akimov V."/>
            <person name="Henningsen J."/>
            <person name="Johansen P.T."/>
            <person name="Kratchmarova I."/>
            <person name="Kassem M."/>
            <person name="Mann M."/>
            <person name="Olsen J.V."/>
            <person name="Blagoev B."/>
        </authorList>
    </citation>
    <scope>PHOSPHORYLATION [LARGE SCALE ANALYSIS] AT SER-1651</scope>
    <scope>IDENTIFICATION BY MASS SPECTROMETRY [LARGE SCALE ANALYSIS]</scope>
</reference>
<reference key="19">
    <citation type="journal article" date="2013" name="J. Proteome Res.">
        <title>Toward a comprehensive characterization of a human cancer cell phosphoproteome.</title>
        <authorList>
            <person name="Zhou H."/>
            <person name="Di Palma S."/>
            <person name="Preisinger C."/>
            <person name="Peng M."/>
            <person name="Polat A.N."/>
            <person name="Heck A.J."/>
            <person name="Mohammed S."/>
        </authorList>
    </citation>
    <scope>PHOSPHORYLATION [LARGE SCALE ANALYSIS] AT SER-1611; SER-1613; SER-1629; SER-1651; SER-1664 AND SER-1721</scope>
    <scope>IDENTIFICATION BY MASS SPECTROMETRY [LARGE SCALE ANALYSIS]</scope>
    <source>
        <tissue>Cervix carcinoma</tissue>
        <tissue>Erythroleukemia</tissue>
    </source>
</reference>
<reference key="20">
    <citation type="journal article" date="2014" name="J. Proteomics">
        <title>An enzyme assisted RP-RPLC approach for in-depth analysis of human liver phosphoproteome.</title>
        <authorList>
            <person name="Bian Y."/>
            <person name="Song C."/>
            <person name="Cheng K."/>
            <person name="Dong M."/>
            <person name="Wang F."/>
            <person name="Huang J."/>
            <person name="Sun D."/>
            <person name="Wang L."/>
            <person name="Ye M."/>
            <person name="Zou H."/>
        </authorList>
    </citation>
    <scope>PHOSPHORYLATION [LARGE SCALE ANALYSIS] AT SER-1669 AND SER-1693</scope>
    <scope>IDENTIFICATION BY MASS SPECTROMETRY [LARGE SCALE ANALYSIS]</scope>
    <source>
        <tissue>Liver</tissue>
    </source>
</reference>
<reference key="21">
    <citation type="journal article" date="2018" name="J. Cell Biol.">
        <title>MRCKalpha is activated by caspase cleavage to assemble an apical actin ring for epithelial cell extrusion.</title>
        <authorList>
            <person name="Gagliardi P.A."/>
            <person name="Somale D."/>
            <person name="Puliafito A."/>
            <person name="Chiaverina G."/>
            <person name="di Blasio L."/>
            <person name="Oneto M."/>
            <person name="Bianchini P."/>
            <person name="Bussolino F."/>
            <person name="Primo L."/>
        </authorList>
    </citation>
    <scope>FUNCTION</scope>
    <scope>CATALYTIC ACTIVITY</scope>
    <scope>PROTEOLYTIC CLEAVAGE</scope>
    <scope>MUTAGENESIS OF ASP-478 AND ASP-984</scope>
</reference>
<reference key="22">
    <citation type="journal article" date="2007" name="Nature">
        <title>Patterns of somatic mutation in human cancer genomes.</title>
        <authorList>
            <person name="Greenman C."/>
            <person name="Stephens P."/>
            <person name="Smith R."/>
            <person name="Dalgliesh G.L."/>
            <person name="Hunter C."/>
            <person name="Bignell G."/>
            <person name="Davies H."/>
            <person name="Teague J."/>
            <person name="Butler A."/>
            <person name="Stevens C."/>
            <person name="Edkins S."/>
            <person name="O'Meara S."/>
            <person name="Vastrik I."/>
            <person name="Schmidt E.E."/>
            <person name="Avis T."/>
            <person name="Barthorpe S."/>
            <person name="Bhamra G."/>
            <person name="Buck G."/>
            <person name="Choudhury B."/>
            <person name="Clements J."/>
            <person name="Cole J."/>
            <person name="Dicks E."/>
            <person name="Forbes S."/>
            <person name="Gray K."/>
            <person name="Halliday K."/>
            <person name="Harrison R."/>
            <person name="Hills K."/>
            <person name="Hinton J."/>
            <person name="Jenkinson A."/>
            <person name="Jones D."/>
            <person name="Menzies A."/>
            <person name="Mironenko T."/>
            <person name="Perry J."/>
            <person name="Raine K."/>
            <person name="Richardson D."/>
            <person name="Shepherd R."/>
            <person name="Small A."/>
            <person name="Tofts C."/>
            <person name="Varian J."/>
            <person name="Webb T."/>
            <person name="West S."/>
            <person name="Widaa S."/>
            <person name="Yates A."/>
            <person name="Cahill D.P."/>
            <person name="Louis D.N."/>
            <person name="Goldstraw P."/>
            <person name="Nicholson A.G."/>
            <person name="Brasseur F."/>
            <person name="Looijenga L."/>
            <person name="Weber B.L."/>
            <person name="Chiew Y.-E."/>
            <person name="DeFazio A."/>
            <person name="Greaves M.F."/>
            <person name="Green A.R."/>
            <person name="Campbell P."/>
            <person name="Birney E."/>
            <person name="Easton D.F."/>
            <person name="Chenevix-Trench G."/>
            <person name="Tan M.-H."/>
            <person name="Khoo S.K."/>
            <person name="Teh B.T."/>
            <person name="Yuen S.T."/>
            <person name="Leung S.Y."/>
            <person name="Wooster R."/>
            <person name="Futreal P.A."/>
            <person name="Stratton M.R."/>
        </authorList>
    </citation>
    <scope>VARIANTS [LARGE SCALE ANALYSIS] LYS-50; MET-231; THR-537; MET-780; CYS-790; THR-1148; HIS-1211; ILE-1317; LYS-1418; VAL-1469 AND ALA-1618</scope>
</reference>
<keyword id="KW-0025">Alternative splicing</keyword>
<keyword id="KW-0067">ATP-binding</keyword>
<keyword id="KW-0966">Cell projection</keyword>
<keyword id="KW-0175">Coiled coil</keyword>
<keyword id="KW-0963">Cytoplasm</keyword>
<keyword id="KW-0418">Kinase</keyword>
<keyword id="KW-0460">Magnesium</keyword>
<keyword id="KW-0479">Metal-binding</keyword>
<keyword id="KW-0547">Nucleotide-binding</keyword>
<keyword id="KW-0597">Phosphoprotein</keyword>
<keyword id="KW-1267">Proteomics identification</keyword>
<keyword id="KW-1185">Reference proteome</keyword>
<keyword id="KW-0723">Serine/threonine-protein kinase</keyword>
<keyword id="KW-0808">Transferase</keyword>
<keyword id="KW-0862">Zinc</keyword>
<keyword id="KW-0863">Zinc-finger</keyword>
<proteinExistence type="evidence at protein level"/>
<comment type="function">
    <text evidence="3 14 15 16 20 21 22 23 24 25">Serine/threonine-protein kinase which is an important downstream effector of CDC42 and plays a role in the regulation of cytoskeleton reorganization and cell migration (PubMed:15723050, PubMed:9092543, PubMed:9418861). Regulates actin cytoskeletal reorganization via phosphorylation of PPP1R12C and MYL9/MLC2 (PubMed:21457715). In concert with MYO18A and LURAP1, is involved in modulating lamellar actomyosin retrograde flow that is crucial to cell protrusion and migration (PubMed:18854160). Phosphorylates: PPP1R12A, LIMK1 and LIMK2 (PubMed:11340065, PubMed:11399775). May play a role in TFRC-mediated iron uptake (PubMed:20188707). In concert with FAM89B/LRAP25 mediates the targeting of LIMK1 to the lamellipodium resulting in its activation and subsequent phosphorylation of CFL1 which is important for lamellipodial F-actin regulation (By similarity). Triggers the formation of an extrusion apical actin ring required for epithelial extrusion of apoptotic cells (PubMed:29162624).</text>
</comment>
<comment type="catalytic activity">
    <reaction evidence="24">
        <text>L-seryl-[protein] + ATP = O-phospho-L-seryl-[protein] + ADP + H(+)</text>
        <dbReference type="Rhea" id="RHEA:17989"/>
        <dbReference type="Rhea" id="RHEA-COMP:9863"/>
        <dbReference type="Rhea" id="RHEA-COMP:11604"/>
        <dbReference type="ChEBI" id="CHEBI:15378"/>
        <dbReference type="ChEBI" id="CHEBI:29999"/>
        <dbReference type="ChEBI" id="CHEBI:30616"/>
        <dbReference type="ChEBI" id="CHEBI:83421"/>
        <dbReference type="ChEBI" id="CHEBI:456216"/>
        <dbReference type="EC" id="2.7.11.1"/>
    </reaction>
</comment>
<comment type="catalytic activity">
    <reaction evidence="23 24">
        <text>L-threonyl-[protein] + ATP = O-phospho-L-threonyl-[protein] + ADP + H(+)</text>
        <dbReference type="Rhea" id="RHEA:46608"/>
        <dbReference type="Rhea" id="RHEA-COMP:11060"/>
        <dbReference type="Rhea" id="RHEA-COMP:11605"/>
        <dbReference type="ChEBI" id="CHEBI:15378"/>
        <dbReference type="ChEBI" id="CHEBI:30013"/>
        <dbReference type="ChEBI" id="CHEBI:30616"/>
        <dbReference type="ChEBI" id="CHEBI:61977"/>
        <dbReference type="ChEBI" id="CHEBI:456216"/>
        <dbReference type="EC" id="2.7.11.1"/>
    </reaction>
</comment>
<comment type="cofactor">
    <cofactor evidence="24">
        <name>Mg(2+)</name>
        <dbReference type="ChEBI" id="CHEBI:18420"/>
    </cofactor>
</comment>
<comment type="activity regulation">
    <text evidence="13 22">Maintained in an inactive, closed conformation by an interaction between the kinase domain and the negative autoregulatory C-terminal coiled-coil region. Agonist binding to the phorbol ester binding site disrupts this, releasing the kinase domain to allow N-terminus-mediated dimerization and kinase activation by transautophosphorylation. Inhibited by chelerythrine chloride.</text>
</comment>
<comment type="subunit">
    <text evidence="3 13 20 25">Homodimer and homotetramer via the coiled coil regions (PubMed:11283256). Interacts tightly with GTP-bound but not GDP-bound CDC42 (PubMed:9418861). Forms a tripartite complex with MYO18A and LURAP1 with the latter acting as an adapter connecting CDC42BPA and MYO18A. LURAP1 binding results in activation of CDC42BPA by abolition of its negative autoregulation (PubMed:18854160). Interacts with LURAP1. Interacts (via AGC-kinase C-terminal domain) with FAM89B/LRAP25 (via LRR repeat). Forms a tripartite complex with FAM89B/LRAP25 and LIMK1 (By similarity).</text>
</comment>
<comment type="interaction">
    <interactant intactId="EBI-689171">
        <id>Q5VT25</id>
    </interactant>
    <interactant intactId="EBI-81752">
        <id>P60953</id>
        <label>CDC42</label>
    </interactant>
    <organismsDiffer>false</organismsDiffer>
    <experiments>6</experiments>
</comment>
<comment type="interaction">
    <interactant intactId="EBI-689171">
        <id>Q5VT25</id>
    </interactant>
    <interactant intactId="EBI-689171">
        <id>Q5VT25</id>
        <label>CDC42BPA</label>
    </interactant>
    <organismsDiffer>false</organismsDiffer>
    <experiments>9</experiments>
</comment>
<comment type="subcellular location">
    <subcellularLocation>
        <location evidence="1">Cytoplasm</location>
    </subcellularLocation>
    <subcellularLocation>
        <location evidence="3">Cell projection</location>
        <location evidence="3">Lamellipodium</location>
    </subcellularLocation>
    <text evidence="1 3">Displays a dispersed punctate distribution and concentrates along the cell periphery, especially at the leading edge and cell-cell junction. This concentration is PH-domain dependent. Localizes in the lamellipodium in a FAM89B/LRAP25-dependent manner.</text>
</comment>
<comment type="alternative products">
    <event type="alternative splicing"/>
    <isoform>
        <id>Q5VT25-1</id>
        <name evidence="33">1</name>
        <sequence type="displayed"/>
    </isoform>
    <isoform>
        <id>Q5VT25-2</id>
        <name evidence="33">2</name>
        <sequence type="described" ref="VSP_051861 VSP_051863"/>
    </isoform>
    <isoform>
        <id>Q5VT25-3</id>
        <name evidence="16">3</name>
        <sequence type="described" ref="VSP_051859 VSP_051860"/>
    </isoform>
    <isoform>
        <id>Q5VT25-4</id>
        <name evidence="17">4</name>
        <sequence type="described" ref="VSP_051862"/>
    </isoform>
    <isoform>
        <id>Q5VT25-5</id>
        <name evidence="16">5</name>
        <sequence type="described" ref="VSP_051860"/>
    </isoform>
    <isoform>
        <id>Q5VT25-6</id>
        <name>6</name>
        <sequence type="described" ref="VSP_051860 VSP_035286"/>
    </isoform>
    <text>Additional isoforms seem to exist. They arise due to a two alternate splice sites, the first site involves splicing of exons 21-24 while the second site involves exons 36-40.</text>
</comment>
<comment type="tissue specificity">
    <text evidence="24">Abundant in the heart, brain, skeletal muscle, kidney, and pancreas, with little or no expression in the lung and liver.</text>
</comment>
<comment type="induction">
    <text evidence="21">Regulated by cellular iron levels.</text>
</comment>
<comment type="PTM">
    <text evidence="23">Proteolytically cleaved by caspases upon apoptosis induction. The cleavage at Asp-478 by CASP3 increases its kinase activity (in vitro).</text>
</comment>
<comment type="similarity">
    <text evidence="33">Belongs to the protein kinase superfamily. AGC Ser/Thr protein kinase family. DMPK subfamily.</text>
</comment>
<comment type="sequence caution" evidence="33">
    <conflict type="erroneous initiation">
        <sequence resource="EMBL-CDS" id="BAD92205"/>
    </conflict>
    <text>Extended N-terminus.</text>
</comment>
<protein>
    <recommendedName>
        <fullName>Serine/threonine-protein kinase MRCK alpha</fullName>
        <ecNumber evidence="23">2.7.11.1</ecNumber>
    </recommendedName>
    <alternativeName>
        <fullName>CDC42-binding protein kinase alpha</fullName>
    </alternativeName>
    <alternativeName>
        <fullName>DMPK-like alpha</fullName>
    </alternativeName>
    <alternativeName>
        <fullName>Myotonic dystrophy kinase-related CDC42-binding kinase alpha</fullName>
        <shortName>MRCK alpha</shortName>
        <shortName>Myotonic dystrophy protein kinase-like alpha</shortName>
    </alternativeName>
</protein>
<feature type="chain" id="PRO_0000086392" description="Serine/threonine-protein kinase MRCK alpha">
    <location>
        <begin position="1"/>
        <end position="1732"/>
    </location>
</feature>
<feature type="domain" description="Protein kinase" evidence="7 24">
    <location>
        <begin position="77"/>
        <end position="343"/>
    </location>
</feature>
<feature type="domain" description="AGC-kinase C-terminal" evidence="9">
    <location>
        <begin position="344"/>
        <end position="414"/>
    </location>
</feature>
<feature type="domain" description="PH" evidence="6">
    <location>
        <begin position="1082"/>
        <end position="1201"/>
    </location>
</feature>
<feature type="domain" description="CNH" evidence="10">
    <location>
        <begin position="1227"/>
        <end position="1499"/>
    </location>
</feature>
<feature type="domain" description="CRIB" evidence="5">
    <location>
        <begin position="1571"/>
        <end position="1584"/>
    </location>
</feature>
<feature type="zinc finger region" description="Phorbol-ester/DAG-type" evidence="8">
    <location>
        <begin position="1012"/>
        <end position="1062"/>
    </location>
</feature>
<feature type="region of interest" description="Disordered" evidence="12">
    <location>
        <begin position="968"/>
        <end position="1003"/>
    </location>
</feature>
<feature type="region of interest" description="Disordered" evidence="12">
    <location>
        <begin position="1591"/>
        <end position="1732"/>
    </location>
</feature>
<feature type="coiled-coil region" evidence="4">
    <location>
        <begin position="437"/>
        <end position="820"/>
    </location>
</feature>
<feature type="coiled-coil region" evidence="4">
    <location>
        <begin position="880"/>
        <end position="943"/>
    </location>
</feature>
<feature type="compositionally biased region" description="Polar residues" evidence="12">
    <location>
        <begin position="1604"/>
        <end position="1619"/>
    </location>
</feature>
<feature type="compositionally biased region" description="Low complexity" evidence="12">
    <location>
        <begin position="1625"/>
        <end position="1640"/>
    </location>
</feature>
<feature type="compositionally biased region" description="Low complexity" evidence="12">
    <location>
        <begin position="1665"/>
        <end position="1674"/>
    </location>
</feature>
<feature type="compositionally biased region" description="Low complexity" evidence="12">
    <location>
        <begin position="1697"/>
        <end position="1707"/>
    </location>
</feature>
<feature type="active site" description="Proton acceptor" evidence="2 7 11">
    <location>
        <position position="201"/>
    </location>
</feature>
<feature type="binding site" evidence="2 7">
    <location>
        <begin position="83"/>
        <end position="91"/>
    </location>
    <ligand>
        <name>ATP</name>
        <dbReference type="ChEBI" id="CHEBI:30616"/>
    </ligand>
</feature>
<feature type="binding site" evidence="7 13">
    <location>
        <position position="106"/>
    </location>
    <ligand>
        <name>ATP</name>
        <dbReference type="ChEBI" id="CHEBI:30616"/>
    </ligand>
</feature>
<feature type="site" description="Cleavage; by CASP3 in vitro" evidence="23">
    <location>
        <begin position="478"/>
        <end position="479"/>
    </location>
</feature>
<feature type="site" description="Cleavage; by CASP3 in vitro" evidence="23">
    <location>
        <begin position="984"/>
        <end position="985"/>
    </location>
</feature>
<feature type="modified residue" description="Phosphoserine; by autocatalysis" evidence="13">
    <location>
        <position position="222"/>
    </location>
</feature>
<feature type="modified residue" description="Phosphoserine; by autocatalysis" evidence="13">
    <location>
        <position position="234"/>
    </location>
</feature>
<feature type="modified residue" description="Phosphothreonine; by autocatalysis" evidence="13">
    <location>
        <position position="240"/>
    </location>
</feature>
<feature type="modified residue" description="Phosphoserine" evidence="1">
    <location>
        <position position="1127"/>
    </location>
</feature>
<feature type="modified residue" description="Phosphoserine" evidence="38">
    <location>
        <position position="1545"/>
    </location>
</feature>
<feature type="modified residue" description="Phosphoserine" evidence="40">
    <location>
        <position position="1611"/>
    </location>
</feature>
<feature type="modified residue" description="Phosphoserine" evidence="40">
    <location>
        <position position="1613"/>
    </location>
</feature>
<feature type="modified residue" description="Phosphoserine" evidence="40">
    <location>
        <position position="1629"/>
    </location>
</feature>
<feature type="modified residue" description="Phosphoserine" evidence="39 40">
    <location>
        <position position="1651"/>
    </location>
</feature>
<feature type="modified residue" description="Phosphoserine" evidence="40">
    <location>
        <position position="1664"/>
    </location>
</feature>
<feature type="modified residue" description="Phosphoserine" evidence="41">
    <location>
        <position position="1669"/>
    </location>
</feature>
<feature type="modified residue" description="Phosphoserine" evidence="41">
    <location>
        <position position="1693"/>
    </location>
</feature>
<feature type="modified residue" description="Phosphoserine" evidence="38">
    <location>
        <position position="1719"/>
    </location>
</feature>
<feature type="modified residue" description="Phosphoserine" evidence="38 40">
    <location>
        <position position="1721"/>
    </location>
</feature>
<feature type="splice variant" id="VSP_051859" description="In isoform 3." evidence="28">
    <location>
        <begin position="550"/>
        <end position="630"/>
    </location>
</feature>
<feature type="splice variant" id="VSP_051862" description="In isoform 4." evidence="29 32">
    <location>
        <begin position="969"/>
        <end position="1009"/>
    </location>
</feature>
<feature type="splice variant" id="VSP_051860" description="In isoform 3, isoform 5 and isoform 6." evidence="28 31">
    <location>
        <begin position="969"/>
        <end position="981"/>
    </location>
</feature>
<feature type="splice variant" id="VSP_051861" description="In isoform 2." evidence="30">
    <original>R</original>
    <variation>TDPVENTYVWNPSVKFHIQSRST</variation>
    <location>
        <position position="969"/>
    </location>
</feature>
<feature type="splice variant" id="VSP_051863" description="In isoform 2." evidence="30">
    <original>CTPASKGRR</original>
    <variation>TSSEAEPVK</variation>
    <location>
        <begin position="973"/>
        <end position="981"/>
    </location>
</feature>
<feature type="splice variant" id="VSP_035286" description="In isoform 6." evidence="31">
    <original>M</original>
    <variation>MPGFPYPSPHHHSGLISSPINFEHIYHMTVNSAEKFLSPDSINPEYSPSLRSVPGTPSFMTLR</variation>
    <location>
        <position position="1597"/>
    </location>
</feature>
<feature type="sequence variant" id="VAR_040830" description="In a lung neuroendocrine carcinoma sample; somatic mutation; dbSNP:rs1694526446." evidence="18">
    <original>E</original>
    <variation>K</variation>
    <location>
        <position position="50"/>
    </location>
</feature>
<feature type="sequence variant" id="VAR_040831" description="In dbSNP:rs34614709." evidence="18">
    <original>T</original>
    <variation>M</variation>
    <location>
        <position position="231"/>
    </location>
</feature>
<feature type="sequence variant" id="VAR_040832" description="In dbSNP:rs56364976." evidence="18">
    <original>I</original>
    <variation>T</variation>
    <location>
        <position position="537"/>
    </location>
</feature>
<feature type="sequence variant" id="VAR_045583" description="In dbSNP:rs56119119." evidence="18">
    <original>T</original>
    <variation>M</variation>
    <location>
        <position position="780"/>
    </location>
</feature>
<feature type="sequence variant" id="VAR_045584" description="In dbSNP:rs34943764." evidence="18">
    <original>Y</original>
    <variation>C</variation>
    <location>
        <position position="790"/>
    </location>
</feature>
<feature type="sequence variant" id="VAR_045585" description="In dbSNP:rs56219089." evidence="18">
    <original>A</original>
    <variation>T</variation>
    <location>
        <position position="1148"/>
    </location>
</feature>
<feature type="sequence variant" id="VAR_045586" description="In dbSNP:rs961490." evidence="18">
    <original>R</original>
    <variation>H</variation>
    <location>
        <position position="1211"/>
    </location>
</feature>
<feature type="sequence variant" id="VAR_045587" description="In dbSNP:rs1929860." evidence="18 19">
    <original>V</original>
    <variation>I</variation>
    <location>
        <position position="1317"/>
    </location>
</feature>
<feature type="sequence variant" id="VAR_040833" evidence="18">
    <original>I</original>
    <variation>K</variation>
    <location>
        <position position="1418"/>
    </location>
</feature>
<feature type="sequence variant" id="VAR_045588" description="In dbSNP:rs55687355." evidence="18">
    <original>A</original>
    <variation>V</variation>
    <location>
        <position position="1469"/>
    </location>
</feature>
<feature type="sequence variant" id="VAR_045589" description="In dbSNP:rs2297417." evidence="18">
    <original>T</original>
    <variation>A</variation>
    <location>
        <position position="1618"/>
    </location>
</feature>
<feature type="sequence variant" id="VAR_045590" description="In dbSNP:rs1661144197.">
    <original>A</original>
    <variation>V</variation>
    <location>
        <position position="1699"/>
    </location>
</feature>
<feature type="sequence variant" id="VAR_057104" description="In dbSNP:rs2802269." evidence="19 26 27">
    <original>A</original>
    <variation>V</variation>
    <location>
        <position position="1712"/>
    </location>
</feature>
<feature type="mutagenesis site" description="Loss of kinase activity." evidence="13">
    <original>K</original>
    <variation>A</variation>
    <location>
        <position position="106"/>
    </location>
</feature>
<feature type="mutagenesis site" description="Increase in autophosphorylation but not kinase activity." evidence="13">
    <original>S</original>
    <variation>L</variation>
    <location>
        <position position="222"/>
    </location>
</feature>
<feature type="mutagenesis site" description="Loss of autophosphorylation and kinase activity." evidence="13">
    <original>S</original>
    <variation>A</variation>
    <location>
        <position position="234"/>
    </location>
</feature>
<feature type="mutagenesis site" description="Loss of autophosphorylation and kinase activity." evidence="13">
    <original>T</original>
    <variation>A</variation>
    <location>
        <position position="240"/>
    </location>
</feature>
<feature type="mutagenesis site" description="Loss of autophosphorylation and kinase activity." evidence="13">
    <original>T</original>
    <variation>A</variation>
    <location>
        <position position="403"/>
    </location>
</feature>
<feature type="mutagenesis site" description="Prevents cleavage by CASP3, impairs the increase of its kinase activity and impairs extrusion apical actin ring assembly." evidence="23">
    <original>D</original>
    <variation>A</variation>
    <location>
        <position position="478"/>
    </location>
</feature>
<feature type="mutagenesis site" description="Prevents cleavage by CASP3." evidence="23">
    <original>D</original>
    <variation>A</variation>
    <location>
        <position position="984"/>
    </location>
</feature>
<feature type="mutagenesis site" description="Loss of CDC42 binding; when associated with A-1582." evidence="25">
    <original>H</original>
    <variation>A</variation>
    <location>
        <position position="1579"/>
    </location>
</feature>
<feature type="mutagenesis site" description="Loss of CDC42 binding; when associated with A-1579." evidence="25">
    <original>H</original>
    <variation>A</variation>
    <location>
        <position position="1582"/>
    </location>
</feature>
<feature type="sequence conflict" description="In Ref. 5; AAB37126." evidence="33" ref="5">
    <original>C</original>
    <variation>Y</variation>
    <location>
        <position position="25"/>
    </location>
</feature>
<feature type="sequence conflict" description="In Ref. 3; CAI46252." evidence="33" ref="3">
    <original>D</original>
    <variation>N</variation>
    <location>
        <position position="809"/>
    </location>
</feature>
<feature type="sequence conflict" description="In Ref. 8." evidence="33" ref="8">
    <original>L</original>
    <variation>V</variation>
    <location>
        <position position="1521"/>
    </location>
</feature>
<feature type="sequence conflict" description="In Ref. 6; BAA32296." evidence="33" ref="6">
    <original>G</original>
    <variation>K</variation>
    <location>
        <position position="1688"/>
    </location>
</feature>
<dbReference type="EC" id="2.7.11.1" evidence="23"/>
<dbReference type="EMBL" id="AJ518975">
    <property type="protein sequence ID" value="CAD57745.1"/>
    <property type="molecule type" value="mRNA"/>
</dbReference>
<dbReference type="EMBL" id="AJ518976">
    <property type="protein sequence ID" value="CAD57746.1"/>
    <property type="molecule type" value="mRNA"/>
</dbReference>
<dbReference type="EMBL" id="AB208968">
    <property type="protein sequence ID" value="BAD92205.1"/>
    <property type="status" value="ALT_INIT"/>
    <property type="molecule type" value="mRNA"/>
</dbReference>
<dbReference type="EMBL" id="CR933723">
    <property type="protein sequence ID" value="CAI46252.1"/>
    <property type="molecule type" value="mRNA"/>
</dbReference>
<dbReference type="EMBL" id="AL353689">
    <property type="protein sequence ID" value="CAI19113.1"/>
    <property type="molecule type" value="Genomic_DNA"/>
</dbReference>
<dbReference type="EMBL" id="AL451047">
    <property type="protein sequence ID" value="CAH71184.1"/>
    <property type="molecule type" value="Genomic_DNA"/>
</dbReference>
<dbReference type="EMBL" id="AL353689">
    <property type="protein sequence ID" value="CAH71184.1"/>
    <property type="status" value="JOINED"/>
    <property type="molecule type" value="Genomic_DNA"/>
</dbReference>
<dbReference type="EMBL" id="AL627308">
    <property type="protein sequence ID" value="CAH71184.1"/>
    <property type="status" value="JOINED"/>
    <property type="molecule type" value="Genomic_DNA"/>
</dbReference>
<dbReference type="EMBL" id="AL451047">
    <property type="protein sequence ID" value="CAH71185.1"/>
    <property type="molecule type" value="Genomic_DNA"/>
</dbReference>
<dbReference type="EMBL" id="AL627308">
    <property type="protein sequence ID" value="CAH71185.1"/>
    <property type="status" value="JOINED"/>
    <property type="molecule type" value="Genomic_DNA"/>
</dbReference>
<dbReference type="EMBL" id="AL353689">
    <property type="protein sequence ID" value="CAH71185.1"/>
    <property type="status" value="JOINED"/>
    <property type="molecule type" value="Genomic_DNA"/>
</dbReference>
<dbReference type="EMBL" id="AL627308">
    <property type="protein sequence ID" value="CAH71336.1"/>
    <property type="molecule type" value="Genomic_DNA"/>
</dbReference>
<dbReference type="EMBL" id="AL353689">
    <property type="protein sequence ID" value="CAH71336.1"/>
    <property type="status" value="JOINED"/>
    <property type="molecule type" value="Genomic_DNA"/>
</dbReference>
<dbReference type="EMBL" id="AL451047">
    <property type="protein sequence ID" value="CAH71336.1"/>
    <property type="status" value="JOINED"/>
    <property type="molecule type" value="Genomic_DNA"/>
</dbReference>
<dbReference type="EMBL" id="AL627308">
    <property type="protein sequence ID" value="CAH71337.1"/>
    <property type="molecule type" value="Genomic_DNA"/>
</dbReference>
<dbReference type="EMBL" id="AL353689">
    <property type="protein sequence ID" value="CAH71337.1"/>
    <property type="status" value="JOINED"/>
    <property type="molecule type" value="Genomic_DNA"/>
</dbReference>
<dbReference type="EMBL" id="AL451047">
    <property type="protein sequence ID" value="CAH71337.1"/>
    <property type="status" value="JOINED"/>
    <property type="molecule type" value="Genomic_DNA"/>
</dbReference>
<dbReference type="EMBL" id="AL353689">
    <property type="protein sequence ID" value="CAI19108.1"/>
    <property type="molecule type" value="Genomic_DNA"/>
</dbReference>
<dbReference type="EMBL" id="AL451047">
    <property type="protein sequence ID" value="CAI19108.1"/>
    <property type="status" value="JOINED"/>
    <property type="molecule type" value="Genomic_DNA"/>
</dbReference>
<dbReference type="EMBL" id="AL627308">
    <property type="protein sequence ID" value="CAI19108.1"/>
    <property type="status" value="JOINED"/>
    <property type="molecule type" value="Genomic_DNA"/>
</dbReference>
<dbReference type="EMBL" id="AL451047">
    <property type="protein sequence ID" value="CAH71183.1"/>
    <property type="molecule type" value="Genomic_DNA"/>
</dbReference>
<dbReference type="EMBL" id="AL353689">
    <property type="protein sequence ID" value="CAH71183.1"/>
    <property type="status" value="JOINED"/>
    <property type="molecule type" value="Genomic_DNA"/>
</dbReference>
<dbReference type="EMBL" id="AL627308">
    <property type="protein sequence ID" value="CAH71183.1"/>
    <property type="status" value="JOINED"/>
    <property type="molecule type" value="Genomic_DNA"/>
</dbReference>
<dbReference type="EMBL" id="AL627308">
    <property type="protein sequence ID" value="CAH71338.1"/>
    <property type="molecule type" value="Genomic_DNA"/>
</dbReference>
<dbReference type="EMBL" id="AL353689">
    <property type="protein sequence ID" value="CAH71338.1"/>
    <property type="status" value="JOINED"/>
    <property type="molecule type" value="Genomic_DNA"/>
</dbReference>
<dbReference type="EMBL" id="AL451047">
    <property type="protein sequence ID" value="CAH71338.1"/>
    <property type="status" value="JOINED"/>
    <property type="molecule type" value="Genomic_DNA"/>
</dbReference>
<dbReference type="EMBL" id="AL353689">
    <property type="protein sequence ID" value="CAI19109.1"/>
    <property type="molecule type" value="Genomic_DNA"/>
</dbReference>
<dbReference type="EMBL" id="AL627308">
    <property type="protein sequence ID" value="CAI19109.1"/>
    <property type="status" value="JOINED"/>
    <property type="molecule type" value="Genomic_DNA"/>
</dbReference>
<dbReference type="EMBL" id="AL451047">
    <property type="protein sequence ID" value="CAI19109.1"/>
    <property type="status" value="JOINED"/>
    <property type="molecule type" value="Genomic_DNA"/>
</dbReference>
<dbReference type="EMBL" id="AL353689">
    <property type="protein sequence ID" value="CAI19110.1"/>
    <property type="molecule type" value="Genomic_DNA"/>
</dbReference>
<dbReference type="EMBL" id="AL451047">
    <property type="protein sequence ID" value="CAI19110.1"/>
    <property type="status" value="JOINED"/>
    <property type="molecule type" value="Genomic_DNA"/>
</dbReference>
<dbReference type="EMBL" id="AL627308">
    <property type="protein sequence ID" value="CAI19110.1"/>
    <property type="status" value="JOINED"/>
    <property type="molecule type" value="Genomic_DNA"/>
</dbReference>
<dbReference type="EMBL" id="AB007920">
    <property type="protein sequence ID" value="BAA32296.2"/>
    <property type="molecule type" value="mRNA"/>
</dbReference>
<dbReference type="EMBL" id="U59305">
    <property type="protein sequence ID" value="AAB37126.1"/>
    <property type="molecule type" value="mRNA"/>
</dbReference>
<dbReference type="CCDS" id="CCDS1558.1">
    <molecule id="Q5VT25-5"/>
</dbReference>
<dbReference type="CCDS" id="CCDS1559.1">
    <molecule id="Q5VT25-3"/>
</dbReference>
<dbReference type="CCDS" id="CCDS91169.1">
    <molecule id="Q5VT25-2"/>
</dbReference>
<dbReference type="CCDS" id="CCDS91170.1">
    <molecule id="Q5VT25-1"/>
</dbReference>
<dbReference type="RefSeq" id="NP_001352939.1">
    <molecule id="Q5VT25-4"/>
    <property type="nucleotide sequence ID" value="NM_001366010.2"/>
</dbReference>
<dbReference type="RefSeq" id="NP_001352948.1">
    <molecule id="Q5VT25-1"/>
    <property type="nucleotide sequence ID" value="NM_001366019.2"/>
</dbReference>
<dbReference type="RefSeq" id="NP_001380943.1">
    <molecule id="Q5VT25-2"/>
    <property type="nucleotide sequence ID" value="NM_001394014.1"/>
</dbReference>
<dbReference type="RefSeq" id="NP_003598.2">
    <molecule id="Q5VT25-5"/>
    <property type="nucleotide sequence ID" value="NM_003607.3"/>
</dbReference>
<dbReference type="RefSeq" id="NP_055641.3">
    <molecule id="Q5VT25-3"/>
    <property type="nucleotide sequence ID" value="NM_014826.4"/>
</dbReference>
<dbReference type="RefSeq" id="XP_005273378.1">
    <molecule id="Q5VT25-6"/>
    <property type="nucleotide sequence ID" value="XM_005273321.5"/>
</dbReference>
<dbReference type="RefSeq" id="XP_005273379.1">
    <property type="nucleotide sequence ID" value="XM_005273322.3"/>
</dbReference>
<dbReference type="RefSeq" id="XP_005273381.1">
    <property type="nucleotide sequence ID" value="XM_005273324.3"/>
</dbReference>
<dbReference type="RefSeq" id="XP_054195222.1">
    <molecule id="Q5VT25-6"/>
    <property type="nucleotide sequence ID" value="XM_054339247.1"/>
</dbReference>
<dbReference type="SMR" id="Q5VT25"/>
<dbReference type="BioGRID" id="114051">
    <property type="interactions" value="170"/>
</dbReference>
<dbReference type="FunCoup" id="Q5VT25">
    <property type="interactions" value="1353"/>
</dbReference>
<dbReference type="IntAct" id="Q5VT25">
    <property type="interactions" value="77"/>
</dbReference>
<dbReference type="MINT" id="Q5VT25"/>
<dbReference type="STRING" id="9606.ENSP00000355731"/>
<dbReference type="BindingDB" id="Q5VT25"/>
<dbReference type="ChEMBL" id="CHEMBL4516"/>
<dbReference type="DrugCentral" id="Q5VT25"/>
<dbReference type="GuidetoPHARMACOLOGY" id="1507"/>
<dbReference type="GlyCosmos" id="Q5VT25">
    <property type="glycosylation" value="1 site, 1 glycan"/>
</dbReference>
<dbReference type="GlyGen" id="Q5VT25">
    <property type="glycosylation" value="3 sites, 1 N-linked glycan (1 site), 1 O-linked glycan (2 sites)"/>
</dbReference>
<dbReference type="iPTMnet" id="Q5VT25"/>
<dbReference type="PhosphoSitePlus" id="Q5VT25"/>
<dbReference type="SwissPalm" id="Q5VT25"/>
<dbReference type="BioMuta" id="CDC42BPA"/>
<dbReference type="DMDM" id="74746874"/>
<dbReference type="CPTAC" id="non-CPTAC-5684"/>
<dbReference type="jPOST" id="Q5VT25"/>
<dbReference type="MassIVE" id="Q5VT25"/>
<dbReference type="PaxDb" id="9606-ENSP00000355731"/>
<dbReference type="PeptideAtlas" id="Q5VT25"/>
<dbReference type="ProteomicsDB" id="65291">
    <molecule id="Q5VT25-1"/>
</dbReference>
<dbReference type="ProteomicsDB" id="65292">
    <molecule id="Q5VT25-2"/>
</dbReference>
<dbReference type="ProteomicsDB" id="65293">
    <molecule id="Q5VT25-3"/>
</dbReference>
<dbReference type="ProteomicsDB" id="65294">
    <molecule id="Q5VT25-4"/>
</dbReference>
<dbReference type="ProteomicsDB" id="65295">
    <molecule id="Q5VT25-5"/>
</dbReference>
<dbReference type="ProteomicsDB" id="65296">
    <molecule id="Q5VT25-6"/>
</dbReference>
<dbReference type="Pumba" id="Q5VT25"/>
<dbReference type="Antibodypedia" id="34655">
    <property type="antibodies" value="243 antibodies from 35 providers"/>
</dbReference>
<dbReference type="DNASU" id="8476"/>
<dbReference type="Ensembl" id="ENST00000334218.9">
    <molecule id="Q5VT25-1"/>
    <property type="protein sequence ID" value="ENSP00000335341.6"/>
    <property type="gene ID" value="ENSG00000143776.20"/>
</dbReference>
<dbReference type="Ensembl" id="ENST00000366766.8">
    <molecule id="Q5VT25-2"/>
    <property type="protein sequence ID" value="ENSP00000355728.5"/>
    <property type="gene ID" value="ENSG00000143776.20"/>
</dbReference>
<dbReference type="Ensembl" id="ENST00000366767.7">
    <molecule id="Q5VT25-3"/>
    <property type="protein sequence ID" value="ENSP00000355729.3"/>
    <property type="gene ID" value="ENSG00000143776.20"/>
</dbReference>
<dbReference type="Ensembl" id="ENST00000366769.7">
    <molecule id="Q5VT25-5"/>
    <property type="protein sequence ID" value="ENSP00000355731.3"/>
    <property type="gene ID" value="ENSG00000143776.20"/>
</dbReference>
<dbReference type="GeneID" id="8476"/>
<dbReference type="KEGG" id="hsa:8476"/>
<dbReference type="MANE-Select" id="ENST00000366766.8">
    <molecule id="Q5VT25-2"/>
    <property type="protein sequence ID" value="ENSP00000355728.5"/>
    <property type="RefSeq nucleotide sequence ID" value="NM_001394014.1"/>
    <property type="RefSeq protein sequence ID" value="NP_001380943.1"/>
</dbReference>
<dbReference type="UCSC" id="uc001hqr.4">
    <molecule id="Q5VT25-1"/>
    <property type="organism name" value="human"/>
</dbReference>
<dbReference type="AGR" id="HGNC:1737"/>
<dbReference type="CTD" id="8476"/>
<dbReference type="DisGeNET" id="8476"/>
<dbReference type="GeneCards" id="CDC42BPA"/>
<dbReference type="HGNC" id="HGNC:1737">
    <property type="gene designation" value="CDC42BPA"/>
</dbReference>
<dbReference type="HPA" id="ENSG00000143776">
    <property type="expression patterns" value="Low tissue specificity"/>
</dbReference>
<dbReference type="MIM" id="603412">
    <property type="type" value="gene"/>
</dbReference>
<dbReference type="neXtProt" id="NX_Q5VT25"/>
<dbReference type="OpenTargets" id="ENSG00000143776"/>
<dbReference type="PharmGKB" id="PA26267"/>
<dbReference type="VEuPathDB" id="HostDB:ENSG00000143776"/>
<dbReference type="eggNOG" id="KOG0612">
    <property type="taxonomic scope" value="Eukaryota"/>
</dbReference>
<dbReference type="GeneTree" id="ENSGT01030000234517"/>
<dbReference type="HOGENOM" id="CLU_000288_140_3_1"/>
<dbReference type="InParanoid" id="Q5VT25"/>
<dbReference type="OMA" id="CCDKVPP"/>
<dbReference type="OrthoDB" id="10047816at2759"/>
<dbReference type="PAN-GO" id="Q5VT25">
    <property type="GO annotations" value="6 GO annotations based on evolutionary models"/>
</dbReference>
<dbReference type="PhylomeDB" id="Q5VT25"/>
<dbReference type="TreeFam" id="TF313551"/>
<dbReference type="PathwayCommons" id="Q5VT25"/>
<dbReference type="Reactome" id="R-HSA-9013148">
    <property type="pathway name" value="CDC42 GTPase cycle"/>
</dbReference>
<dbReference type="Reactome" id="R-HSA-9013149">
    <property type="pathway name" value="RAC1 GTPase cycle"/>
</dbReference>
<dbReference type="Reactome" id="R-HSA-9013406">
    <property type="pathway name" value="RHOQ GTPase cycle"/>
</dbReference>
<dbReference type="Reactome" id="R-HSA-9013409">
    <property type="pathway name" value="RHOJ GTPase cycle"/>
</dbReference>
<dbReference type="SignaLink" id="Q5VT25"/>
<dbReference type="SIGNOR" id="Q5VT25"/>
<dbReference type="BioGRID-ORCS" id="8476">
    <property type="hits" value="7 hits in 1193 CRISPR screens"/>
</dbReference>
<dbReference type="CD-CODE" id="FB4E32DD">
    <property type="entry name" value="Presynaptic clusters and postsynaptic densities"/>
</dbReference>
<dbReference type="ChiTaRS" id="CDC42BPA">
    <property type="organism name" value="human"/>
</dbReference>
<dbReference type="GeneWiki" id="CDC42BPA"/>
<dbReference type="GenomeRNAi" id="8476"/>
<dbReference type="Pharos" id="Q5VT25">
    <property type="development level" value="Tchem"/>
</dbReference>
<dbReference type="PRO" id="PR:Q5VT25"/>
<dbReference type="Proteomes" id="UP000005640">
    <property type="component" value="Chromosome 1"/>
</dbReference>
<dbReference type="RNAct" id="Q5VT25">
    <property type="molecule type" value="protein"/>
</dbReference>
<dbReference type="Bgee" id="ENSG00000143776">
    <property type="expression patterns" value="Expressed in medial globus pallidus and 211 other cell types or tissues"/>
</dbReference>
<dbReference type="ExpressionAtlas" id="Q5VT25">
    <property type="expression patterns" value="baseline and differential"/>
</dbReference>
<dbReference type="GO" id="GO:0042641">
    <property type="term" value="C:actomyosin"/>
    <property type="evidence" value="ECO:0000314"/>
    <property type="project" value="UniProtKB"/>
</dbReference>
<dbReference type="GO" id="GO:0031252">
    <property type="term" value="C:cell leading edge"/>
    <property type="evidence" value="ECO:0000250"/>
    <property type="project" value="UniProtKB"/>
</dbReference>
<dbReference type="GO" id="GO:0005911">
    <property type="term" value="C:cell-cell junction"/>
    <property type="evidence" value="ECO:0000250"/>
    <property type="project" value="UniProtKB"/>
</dbReference>
<dbReference type="GO" id="GO:0005737">
    <property type="term" value="C:cytoplasm"/>
    <property type="evidence" value="ECO:0000318"/>
    <property type="project" value="GO_Central"/>
</dbReference>
<dbReference type="GO" id="GO:0005856">
    <property type="term" value="C:cytoskeleton"/>
    <property type="evidence" value="ECO:0000318"/>
    <property type="project" value="GO_Central"/>
</dbReference>
<dbReference type="GO" id="GO:0005829">
    <property type="term" value="C:cytosol"/>
    <property type="evidence" value="ECO:0000304"/>
    <property type="project" value="Reactome"/>
</dbReference>
<dbReference type="GO" id="GO:0070062">
    <property type="term" value="C:extracellular exosome"/>
    <property type="evidence" value="ECO:0007005"/>
    <property type="project" value="UniProtKB"/>
</dbReference>
<dbReference type="GO" id="GO:0030027">
    <property type="term" value="C:lamellipodium"/>
    <property type="evidence" value="ECO:0000250"/>
    <property type="project" value="UniProtKB"/>
</dbReference>
<dbReference type="GO" id="GO:0005524">
    <property type="term" value="F:ATP binding"/>
    <property type="evidence" value="ECO:0000314"/>
    <property type="project" value="UniProtKB"/>
</dbReference>
<dbReference type="GO" id="GO:0042802">
    <property type="term" value="F:identical protein binding"/>
    <property type="evidence" value="ECO:0000353"/>
    <property type="project" value="IntAct"/>
</dbReference>
<dbReference type="GO" id="GO:0000287">
    <property type="term" value="F:magnesium ion binding"/>
    <property type="evidence" value="ECO:0000314"/>
    <property type="project" value="UniProtKB"/>
</dbReference>
<dbReference type="GO" id="GO:0106310">
    <property type="term" value="F:protein serine kinase activity"/>
    <property type="evidence" value="ECO:0007669"/>
    <property type="project" value="RHEA"/>
</dbReference>
<dbReference type="GO" id="GO:0004674">
    <property type="term" value="F:protein serine/threonine kinase activity"/>
    <property type="evidence" value="ECO:0000314"/>
    <property type="project" value="UniProtKB"/>
</dbReference>
<dbReference type="GO" id="GO:0008270">
    <property type="term" value="F:zinc ion binding"/>
    <property type="evidence" value="ECO:0007669"/>
    <property type="project" value="UniProtKB-KW"/>
</dbReference>
<dbReference type="GO" id="GO:0030036">
    <property type="term" value="P:actin cytoskeleton organization"/>
    <property type="evidence" value="ECO:0000314"/>
    <property type="project" value="UniProtKB"/>
</dbReference>
<dbReference type="GO" id="GO:0031032">
    <property type="term" value="P:actomyosin structure organization"/>
    <property type="evidence" value="ECO:0000315"/>
    <property type="project" value="UniProtKB"/>
</dbReference>
<dbReference type="GO" id="GO:0016477">
    <property type="term" value="P:cell migration"/>
    <property type="evidence" value="ECO:0000315"/>
    <property type="project" value="UniProtKB"/>
</dbReference>
<dbReference type="GO" id="GO:0006468">
    <property type="term" value="P:protein phosphorylation"/>
    <property type="evidence" value="ECO:0000314"/>
    <property type="project" value="UniProtKB"/>
</dbReference>
<dbReference type="CDD" id="cd20864">
    <property type="entry name" value="C1_MRCKalpha"/>
    <property type="match status" value="1"/>
</dbReference>
<dbReference type="CDD" id="cd00132">
    <property type="entry name" value="CRIB"/>
    <property type="match status" value="1"/>
</dbReference>
<dbReference type="CDD" id="cd01243">
    <property type="entry name" value="PH_MRCK"/>
    <property type="match status" value="1"/>
</dbReference>
<dbReference type="CDD" id="cd05623">
    <property type="entry name" value="STKc_MRCK_alpha"/>
    <property type="match status" value="1"/>
</dbReference>
<dbReference type="FunFam" id="1.10.510.10:FF:000014">
    <property type="entry name" value="Non-specific serine/threonine protein kinase"/>
    <property type="match status" value="1"/>
</dbReference>
<dbReference type="FunFam" id="1.20.5.340:FF:000010">
    <property type="entry name" value="Non-specific serine/threonine protein kinase"/>
    <property type="match status" value="1"/>
</dbReference>
<dbReference type="FunFam" id="2.30.29.30:FF:000032">
    <property type="entry name" value="Non-specific serine/threonine protein kinase"/>
    <property type="match status" value="1"/>
</dbReference>
<dbReference type="FunFam" id="3.30.60.20:FF:000005">
    <property type="entry name" value="Non-specific serine/threonine protein kinase"/>
    <property type="match status" value="1"/>
</dbReference>
<dbReference type="FunFam" id="3.30.200.20:FF:001055">
    <property type="entry name" value="Serine/threonine-protein kinase MRCK beta"/>
    <property type="match status" value="1"/>
</dbReference>
<dbReference type="Gene3D" id="1.20.5.340">
    <property type="match status" value="1"/>
</dbReference>
<dbReference type="Gene3D" id="3.30.60.20">
    <property type="match status" value="1"/>
</dbReference>
<dbReference type="Gene3D" id="3.30.200.20">
    <property type="entry name" value="Phosphorylase Kinase, domain 1"/>
    <property type="match status" value="1"/>
</dbReference>
<dbReference type="Gene3D" id="2.30.29.30">
    <property type="entry name" value="Pleckstrin-homology domain (PH domain)/Phosphotyrosine-binding domain (PTB)"/>
    <property type="match status" value="1"/>
</dbReference>
<dbReference type="Gene3D" id="1.10.510.10">
    <property type="entry name" value="Transferase(Phosphotransferase) domain 1"/>
    <property type="match status" value="1"/>
</dbReference>
<dbReference type="InterPro" id="IPR000961">
    <property type="entry name" value="AGC-kinase_C"/>
</dbReference>
<dbReference type="InterPro" id="IPR046349">
    <property type="entry name" value="C1-like_sf"/>
</dbReference>
<dbReference type="InterPro" id="IPR001180">
    <property type="entry name" value="CNH_dom"/>
</dbReference>
<dbReference type="InterPro" id="IPR000095">
    <property type="entry name" value="CRIB_dom"/>
</dbReference>
<dbReference type="InterPro" id="IPR031597">
    <property type="entry name" value="KELK"/>
</dbReference>
<dbReference type="InterPro" id="IPR011009">
    <property type="entry name" value="Kinase-like_dom_sf"/>
</dbReference>
<dbReference type="InterPro" id="IPR026611">
    <property type="entry name" value="MRCK_alpha_cat"/>
</dbReference>
<dbReference type="InterPro" id="IPR014930">
    <property type="entry name" value="Myotonic_dystrophy_kinase_coil"/>
</dbReference>
<dbReference type="InterPro" id="IPR002219">
    <property type="entry name" value="PE/DAG-bd"/>
</dbReference>
<dbReference type="InterPro" id="IPR011993">
    <property type="entry name" value="PH-like_dom_sf"/>
</dbReference>
<dbReference type="InterPro" id="IPR001849">
    <property type="entry name" value="PH_domain"/>
</dbReference>
<dbReference type="InterPro" id="IPR017892">
    <property type="entry name" value="Pkinase_C"/>
</dbReference>
<dbReference type="InterPro" id="IPR000719">
    <property type="entry name" value="Prot_kinase_dom"/>
</dbReference>
<dbReference type="InterPro" id="IPR017441">
    <property type="entry name" value="Protein_kinase_ATP_BS"/>
</dbReference>
<dbReference type="InterPro" id="IPR050839">
    <property type="entry name" value="Rho-assoc_Ser/Thr_Kinase"/>
</dbReference>
<dbReference type="InterPro" id="IPR008271">
    <property type="entry name" value="Ser/Thr_kinase_AS"/>
</dbReference>
<dbReference type="PANTHER" id="PTHR22988">
    <property type="entry name" value="MYOTONIC DYSTROPHY S/T KINASE-RELATED"/>
    <property type="match status" value="1"/>
</dbReference>
<dbReference type="PANTHER" id="PTHR22988:SF31">
    <property type="entry name" value="SERINE_THREONINE-PROTEIN KINASE MRCK ALPHA"/>
    <property type="match status" value="1"/>
</dbReference>
<dbReference type="Pfam" id="PF00130">
    <property type="entry name" value="C1_1"/>
    <property type="match status" value="1"/>
</dbReference>
<dbReference type="Pfam" id="PF00780">
    <property type="entry name" value="CNH"/>
    <property type="match status" value="1"/>
</dbReference>
<dbReference type="Pfam" id="PF08826">
    <property type="entry name" value="DMPK_coil"/>
    <property type="match status" value="1"/>
</dbReference>
<dbReference type="Pfam" id="PF15796">
    <property type="entry name" value="KELK"/>
    <property type="match status" value="1"/>
</dbReference>
<dbReference type="Pfam" id="PF25346">
    <property type="entry name" value="PH_MRCK"/>
    <property type="match status" value="1"/>
</dbReference>
<dbReference type="Pfam" id="PF00069">
    <property type="entry name" value="Pkinase"/>
    <property type="match status" value="1"/>
</dbReference>
<dbReference type="Pfam" id="PF00433">
    <property type="entry name" value="Pkinase_C"/>
    <property type="match status" value="1"/>
</dbReference>
<dbReference type="SMART" id="SM00109">
    <property type="entry name" value="C1"/>
    <property type="match status" value="1"/>
</dbReference>
<dbReference type="SMART" id="SM00036">
    <property type="entry name" value="CNH"/>
    <property type="match status" value="1"/>
</dbReference>
<dbReference type="SMART" id="SM00285">
    <property type="entry name" value="PBD"/>
    <property type="match status" value="1"/>
</dbReference>
<dbReference type="SMART" id="SM00233">
    <property type="entry name" value="PH"/>
    <property type="match status" value="1"/>
</dbReference>
<dbReference type="SMART" id="SM00133">
    <property type="entry name" value="S_TK_X"/>
    <property type="match status" value="1"/>
</dbReference>
<dbReference type="SMART" id="SM00220">
    <property type="entry name" value="S_TKc"/>
    <property type="match status" value="1"/>
</dbReference>
<dbReference type="SUPFAM" id="SSF57889">
    <property type="entry name" value="Cysteine-rich domain"/>
    <property type="match status" value="1"/>
</dbReference>
<dbReference type="SUPFAM" id="SSF50729">
    <property type="entry name" value="PH domain-like"/>
    <property type="match status" value="1"/>
</dbReference>
<dbReference type="SUPFAM" id="SSF56112">
    <property type="entry name" value="Protein kinase-like (PK-like)"/>
    <property type="match status" value="1"/>
</dbReference>
<dbReference type="SUPFAM" id="SSF69322">
    <property type="entry name" value="Tricorn protease domain 2"/>
    <property type="match status" value="1"/>
</dbReference>
<dbReference type="PROSITE" id="PS51285">
    <property type="entry name" value="AGC_KINASE_CTER"/>
    <property type="match status" value="1"/>
</dbReference>
<dbReference type="PROSITE" id="PS50219">
    <property type="entry name" value="CNH"/>
    <property type="match status" value="1"/>
</dbReference>
<dbReference type="PROSITE" id="PS50108">
    <property type="entry name" value="CRIB"/>
    <property type="match status" value="1"/>
</dbReference>
<dbReference type="PROSITE" id="PS50003">
    <property type="entry name" value="PH_DOMAIN"/>
    <property type="match status" value="1"/>
</dbReference>
<dbReference type="PROSITE" id="PS00107">
    <property type="entry name" value="PROTEIN_KINASE_ATP"/>
    <property type="match status" value="1"/>
</dbReference>
<dbReference type="PROSITE" id="PS50011">
    <property type="entry name" value="PROTEIN_KINASE_DOM"/>
    <property type="match status" value="1"/>
</dbReference>
<dbReference type="PROSITE" id="PS00108">
    <property type="entry name" value="PROTEIN_KINASE_ST"/>
    <property type="match status" value="1"/>
</dbReference>
<dbReference type="PROSITE" id="PS00479">
    <property type="entry name" value="ZF_DAG_PE_1"/>
    <property type="match status" value="1"/>
</dbReference>
<dbReference type="PROSITE" id="PS50081">
    <property type="entry name" value="ZF_DAG_PE_2"/>
    <property type="match status" value="1"/>
</dbReference>